<sequence length="606" mass="66407">MPYEIKKVFASLPQVERGVSKILGGDPKGDHFLYTNGKCVILRNIDNPAIADIYTEHAHQVVVAKYAPSGFYIASGDISGKLRIWDTTQKEHLLKYEYQPFAGKIKDIAWTEDSKRIAVVGEGREKFGAVFLWDTGSSVGEITGHNKVINSVDIKQTRPYRLATGSDDNCAAFFEGPPFKFKFTIGDHSRFVNCVRFSPDGNRFATASADGQIFIYDGKTGEKVCALGESKAHDGGIYAISWSPDSTHLLSASGDKTSKIWDVNVNSVVSTFPMGSNVLDQQLGCLWQKDHLLSISLSGYINYLDKNNPSKPLRVIKGHSKSIQCLTVHRNGGKSYIYSGSHDGHINYWDSETGENDSFSGKGHTNQVSRMTVNESEQLVSCSMDDTVRYTNLTLRDYSGQGVVKLDVQPKCVAVGPGGYTVVVCIGQIVLLKDQKKCFSIDNPGYEPEVVAVHPGGDTVAVGGTDGNVRVYSILASTLKDEGKLLEAKGPVTDVAYSHDGAFLAVCDASKVVTVFSVADGYSENNVFYGHHAKIVCLAWSPDNEHFASGGMDMMVYVWTLSDPETKVKIQDAHRLHHVSSLAWLDEHTLVTTSHDASVKEWTITY</sequence>
<organism>
    <name type="scientific">Mus musculus</name>
    <name type="common">Mouse</name>
    <dbReference type="NCBI Taxonomy" id="10090"/>
    <lineage>
        <taxon>Eukaryota</taxon>
        <taxon>Metazoa</taxon>
        <taxon>Chordata</taxon>
        <taxon>Craniata</taxon>
        <taxon>Vertebrata</taxon>
        <taxon>Euteleostomi</taxon>
        <taxon>Mammalia</taxon>
        <taxon>Eutheria</taxon>
        <taxon>Euarchontoglires</taxon>
        <taxon>Glires</taxon>
        <taxon>Rodentia</taxon>
        <taxon>Myomorpha</taxon>
        <taxon>Muroidea</taxon>
        <taxon>Muridae</taxon>
        <taxon>Murinae</taxon>
        <taxon>Mus</taxon>
        <taxon>Mus</taxon>
    </lineage>
</organism>
<name>WDR1_MOUSE</name>
<accession>O88342</accession>
<gene>
    <name type="primary">Wdr1</name>
</gene>
<reference key="1">
    <citation type="journal article" date="1999" name="Genomics">
        <title>A gene upregulated in the acoustically damaged chick basilar papilla encodes a novel WD40 repeat protein.</title>
        <authorList>
            <person name="Adler H.J."/>
            <person name="Winnicki R.S."/>
            <person name="Gong T.-W.L."/>
            <person name="Lomax M.I."/>
        </authorList>
    </citation>
    <scope>NUCLEOTIDE SEQUENCE [MRNA]</scope>
</reference>
<reference key="2">
    <citation type="submission" date="2007-03" db="UniProtKB">
        <authorList>
            <person name="Lubec G."/>
            <person name="Klug S."/>
        </authorList>
    </citation>
    <scope>PROTEIN SEQUENCE OF 44-65 AND 162-180</scope>
    <scope>IDENTIFICATION BY MASS SPECTROMETRY</scope>
    <source>
        <tissue>Hippocampus</tissue>
    </source>
</reference>
<reference key="3">
    <citation type="journal article" date="2007" name="Blood">
        <title>Mutations in the cofilin partner Aip1/Wdr1 cause autoinflammatory disease and macrothrombocytopenia.</title>
        <authorList>
            <person name="Kile B.T."/>
            <person name="Panopoulos A.D."/>
            <person name="Stirzaker R.A."/>
            <person name="Hacking D.F."/>
            <person name="Tahtamouni L.H."/>
            <person name="Willson T.A."/>
            <person name="Mielke L.A."/>
            <person name="Henley K.J."/>
            <person name="Zhang J.G."/>
            <person name="Wicks I.P."/>
            <person name="Stevenson W.S."/>
            <person name="Nurden P."/>
            <person name="Watowich S.S."/>
            <person name="Justice M.J."/>
        </authorList>
    </citation>
    <scope>DISRUPTION PHENOTYPE</scope>
    <scope>FUNCTION</scope>
</reference>
<reference key="4">
    <citation type="journal article" date="2008" name="J. Proteome Res.">
        <title>Large-scale identification and evolution indexing of tyrosine phosphorylation sites from murine brain.</title>
        <authorList>
            <person name="Ballif B.A."/>
            <person name="Carey G.R."/>
            <person name="Sunyaev S.R."/>
            <person name="Gygi S.P."/>
        </authorList>
    </citation>
    <scope>PHOSPHORYLATION [LARGE SCALE ANALYSIS] AT TYR-238</scope>
    <scope>IDENTIFICATION BY MASS SPECTROMETRY [LARGE SCALE ANALYSIS]</scope>
    <source>
        <tissue>Brain</tissue>
    </source>
</reference>
<reference key="5">
    <citation type="journal article" date="2010" name="Cell">
        <title>A tissue-specific atlas of mouse protein phosphorylation and expression.</title>
        <authorList>
            <person name="Huttlin E.L."/>
            <person name="Jedrychowski M.P."/>
            <person name="Elias J.E."/>
            <person name="Goswami T."/>
            <person name="Rad R."/>
            <person name="Beausoleil S.A."/>
            <person name="Villen J."/>
            <person name="Haas W."/>
            <person name="Sowa M.E."/>
            <person name="Gygi S.P."/>
        </authorList>
    </citation>
    <scope>IDENTIFICATION BY MASS SPECTROMETRY [LARGE SCALE ANALYSIS]</scope>
    <source>
        <tissue>Brain</tissue>
        <tissue>Brown adipose tissue</tissue>
        <tissue>Heart</tissue>
        <tissue>Kidney</tissue>
        <tissue>Liver</tissue>
        <tissue>Lung</tissue>
        <tissue>Pancreas</tissue>
        <tissue>Spleen</tissue>
        <tissue>Testis</tissue>
    </source>
</reference>
<reference key="6">
    <citation type="journal article" date="2013" name="Mol. Cell">
        <title>SIRT5-mediated lysine desuccinylation impacts diverse metabolic pathways.</title>
        <authorList>
            <person name="Park J."/>
            <person name="Chen Y."/>
            <person name="Tishkoff D.X."/>
            <person name="Peng C."/>
            <person name="Tan M."/>
            <person name="Dai L."/>
            <person name="Xie Z."/>
            <person name="Zhang Y."/>
            <person name="Zwaans B.M."/>
            <person name="Skinner M.E."/>
            <person name="Lombard D.B."/>
            <person name="Zhao Y."/>
        </authorList>
    </citation>
    <scope>ACETYLATION [LARGE SCALE ANALYSIS] AT LYS-95 AND LYS-480</scope>
    <scope>IDENTIFICATION BY MASS SPECTROMETRY [LARGE SCALE ANALYSIS]</scope>
    <source>
        <tissue>Embryonic fibroblast</tissue>
    </source>
</reference>
<reference key="7">
    <citation type="journal article" date="2014" name="Am. J. Pathol.">
        <title>A cardiomyocyte-specific Wdr1 knockout demonstrates essential functional roles for actin disassembly during myocardial growth and maintenance in mice.</title>
        <authorList>
            <person name="Yuan B."/>
            <person name="Wan P."/>
            <person name="Chu D."/>
            <person name="Nie J."/>
            <person name="Cao Y."/>
            <person name="Luo W."/>
            <person name="Lu S."/>
            <person name="Chen J."/>
            <person name="Yang Z."/>
        </authorList>
    </citation>
    <scope>FUNCTION</scope>
</reference>
<reference key="8">
    <citation type="journal article" date="2015" name="Nat. Cell Biol.">
        <title>Wdr1-mediated cell shape dynamics and cortical tension are essential for epidermal planar cell polarity.</title>
        <authorList>
            <person name="Luxenburg C."/>
            <person name="Heller E."/>
            <person name="Pasolli H.A."/>
            <person name="Chai S."/>
            <person name="Nikolova M."/>
            <person name="Stokes N."/>
            <person name="Fuchs E."/>
        </authorList>
    </citation>
    <scope>FUNCTION</scope>
</reference>
<comment type="function">
    <text evidence="1 3 5 6">Induces disassembly of actin filaments in conjunction with ADF/cofilin family proteins (By similarity). Enhances cofilin-mediated actin severing (PubMed:25915128). Involved in cytokinesis. Involved in chemotactic cell migration by restricting lamellipodial membrane protrusions (By similarity). Involved in myocardium sarcomere organization. Required for cardiomyocyte growth at the postnatal and maintenance at the adult stage (PubMed:24840128). Involved in neutrophil actin dynamics and migration. Involved in megakaryocyte maturation and platelet shedding (PubMed:17515402). Required for the establishment of planar cell polarity (PCP) during follicular epithelium development and for cell shape changes during PCP; the function seems to implicate cooperation with CFL1 and/or DSTN/ADF. Involved in the generation/maintenance of cortical tension (PubMed:25915128). Involved in assembly and maintenance of epithelial apical cell junctions and plays a role in the organization of the perijunctional actomyosin belt (By similarity).</text>
</comment>
<comment type="subcellular location">
    <subcellularLocation>
        <location evidence="2">Cytoplasm</location>
        <location evidence="2">Cytoskeleton</location>
    </subcellularLocation>
    <subcellularLocation>
        <location evidence="1">Cell projection</location>
        <location evidence="1">Podosome</location>
    </subcellularLocation>
</comment>
<comment type="disruption phenotype">
    <text evidence="4">Embryonic lethal. Partial deficiencies disrupt megakaryocyte maturation, platelet shedding and provoke neutrophilic autoinflammatory disease.</text>
</comment>
<comment type="similarity">
    <text evidence="7">Belongs to the WD repeat AIP1 family.</text>
</comment>
<protein>
    <recommendedName>
        <fullName>WD repeat-containing protein 1</fullName>
    </recommendedName>
    <alternativeName>
        <fullName>Actin-interacting protein 1</fullName>
        <shortName>AIP1</shortName>
    </alternativeName>
</protein>
<dbReference type="EMBL" id="AF020055">
    <property type="protein sequence ID" value="AAD05043.1"/>
    <property type="molecule type" value="mRNA"/>
</dbReference>
<dbReference type="CCDS" id="CCDS51485.1"/>
<dbReference type="RefSeq" id="NP_035845.1">
    <property type="nucleotide sequence ID" value="NM_011715.3"/>
</dbReference>
<dbReference type="SMR" id="O88342"/>
<dbReference type="BioGRID" id="204554">
    <property type="interactions" value="29"/>
</dbReference>
<dbReference type="FunCoup" id="O88342">
    <property type="interactions" value="2052"/>
</dbReference>
<dbReference type="IntAct" id="O88342">
    <property type="interactions" value="13"/>
</dbReference>
<dbReference type="MINT" id="O88342"/>
<dbReference type="STRING" id="10090.ENSMUSP00000005234"/>
<dbReference type="GlyGen" id="O88342">
    <property type="glycosylation" value="3 sites, 1 N-linked glycan (1 site), 1 O-linked glycan (1 site)"/>
</dbReference>
<dbReference type="iPTMnet" id="O88342"/>
<dbReference type="PhosphoSitePlus" id="O88342"/>
<dbReference type="SwissPalm" id="O88342"/>
<dbReference type="REPRODUCTION-2DPAGE" id="IPI00314748"/>
<dbReference type="REPRODUCTION-2DPAGE" id="O88342"/>
<dbReference type="CPTAC" id="non-CPTAC-3680"/>
<dbReference type="CPTAC" id="non-CPTAC-3955"/>
<dbReference type="jPOST" id="O88342"/>
<dbReference type="PaxDb" id="10090-ENSMUSP00000005234"/>
<dbReference type="PeptideAtlas" id="O88342"/>
<dbReference type="ProteomicsDB" id="297939"/>
<dbReference type="Pumba" id="O88342"/>
<dbReference type="Antibodypedia" id="22867">
    <property type="antibodies" value="175 antibodies from 29 providers"/>
</dbReference>
<dbReference type="DNASU" id="22388"/>
<dbReference type="Ensembl" id="ENSMUST00000005234.13">
    <property type="protein sequence ID" value="ENSMUSP00000005234.10"/>
    <property type="gene ID" value="ENSMUSG00000005103.13"/>
</dbReference>
<dbReference type="GeneID" id="22388"/>
<dbReference type="KEGG" id="mmu:22388"/>
<dbReference type="UCSC" id="uc033ije.1">
    <property type="organism name" value="mouse"/>
</dbReference>
<dbReference type="AGR" id="MGI:1337100"/>
<dbReference type="CTD" id="9948"/>
<dbReference type="MGI" id="MGI:1337100">
    <property type="gene designation" value="Wdr1"/>
</dbReference>
<dbReference type="VEuPathDB" id="HostDB:ENSMUSG00000005103"/>
<dbReference type="eggNOG" id="KOG0318">
    <property type="taxonomic scope" value="Eukaryota"/>
</dbReference>
<dbReference type="GeneTree" id="ENSGT00390000009416"/>
<dbReference type="HOGENOM" id="CLU_015246_3_0_1"/>
<dbReference type="InParanoid" id="O88342"/>
<dbReference type="OMA" id="FYQGPPF"/>
<dbReference type="OrthoDB" id="2306at2759"/>
<dbReference type="PhylomeDB" id="O88342"/>
<dbReference type="TreeFam" id="TF300821"/>
<dbReference type="Reactome" id="R-MMU-114608">
    <property type="pathway name" value="Platelet degranulation"/>
</dbReference>
<dbReference type="BioGRID-ORCS" id="22388">
    <property type="hits" value="24 hits in 75 CRISPR screens"/>
</dbReference>
<dbReference type="ChiTaRS" id="Wdr1">
    <property type="organism name" value="mouse"/>
</dbReference>
<dbReference type="PRO" id="PR:O88342"/>
<dbReference type="Proteomes" id="UP000000589">
    <property type="component" value="Chromosome 5"/>
</dbReference>
<dbReference type="RNAct" id="O88342">
    <property type="molecule type" value="protein"/>
</dbReference>
<dbReference type="Bgee" id="ENSMUSG00000005103">
    <property type="expression patterns" value="Expressed in ankle joint and 260 other cell types or tissues"/>
</dbReference>
<dbReference type="ExpressionAtlas" id="O88342">
    <property type="expression patterns" value="baseline and differential"/>
</dbReference>
<dbReference type="GO" id="GO:0015629">
    <property type="term" value="C:actin cytoskeleton"/>
    <property type="evidence" value="ECO:0000266"/>
    <property type="project" value="MGI"/>
</dbReference>
<dbReference type="GO" id="GO:0042995">
    <property type="term" value="C:cell projection"/>
    <property type="evidence" value="ECO:0007669"/>
    <property type="project" value="UniProtKB-KW"/>
</dbReference>
<dbReference type="GO" id="GO:0005911">
    <property type="term" value="C:cell-cell junction"/>
    <property type="evidence" value="ECO:0007669"/>
    <property type="project" value="Ensembl"/>
</dbReference>
<dbReference type="GO" id="GO:0005829">
    <property type="term" value="C:cytosol"/>
    <property type="evidence" value="ECO:0007669"/>
    <property type="project" value="Ensembl"/>
</dbReference>
<dbReference type="GO" id="GO:0098978">
    <property type="term" value="C:glutamatergic synapse"/>
    <property type="evidence" value="ECO:0000314"/>
    <property type="project" value="SynGO"/>
</dbReference>
<dbReference type="GO" id="GO:0043209">
    <property type="term" value="C:myelin sheath"/>
    <property type="evidence" value="ECO:0007005"/>
    <property type="project" value="UniProtKB"/>
</dbReference>
<dbReference type="GO" id="GO:0005886">
    <property type="term" value="C:plasma membrane"/>
    <property type="evidence" value="ECO:0007669"/>
    <property type="project" value="Ensembl"/>
</dbReference>
<dbReference type="GO" id="GO:0002102">
    <property type="term" value="C:podosome"/>
    <property type="evidence" value="ECO:0007669"/>
    <property type="project" value="UniProtKB-SubCell"/>
</dbReference>
<dbReference type="GO" id="GO:0045202">
    <property type="term" value="C:synapse"/>
    <property type="evidence" value="ECO:0000314"/>
    <property type="project" value="SynGO"/>
</dbReference>
<dbReference type="GO" id="GO:0003779">
    <property type="term" value="F:actin binding"/>
    <property type="evidence" value="ECO:0000266"/>
    <property type="project" value="MGI"/>
</dbReference>
<dbReference type="GO" id="GO:0051015">
    <property type="term" value="F:actin filament binding"/>
    <property type="evidence" value="ECO:0000250"/>
    <property type="project" value="UniProtKB"/>
</dbReference>
<dbReference type="GO" id="GO:0030036">
    <property type="term" value="P:actin cytoskeleton organization"/>
    <property type="evidence" value="ECO:0000315"/>
    <property type="project" value="MGI"/>
</dbReference>
<dbReference type="GO" id="GO:0030043">
    <property type="term" value="P:actin filament fragmentation"/>
    <property type="evidence" value="ECO:0000315"/>
    <property type="project" value="UniProtKB"/>
</dbReference>
<dbReference type="GO" id="GO:0043297">
    <property type="term" value="P:apical junction assembly"/>
    <property type="evidence" value="ECO:0007669"/>
    <property type="project" value="Ensembl"/>
</dbReference>
<dbReference type="GO" id="GO:0030865">
    <property type="term" value="P:cortical cytoskeleton organization"/>
    <property type="evidence" value="ECO:0000315"/>
    <property type="project" value="UniProtKB"/>
</dbReference>
<dbReference type="GO" id="GO:0042247">
    <property type="term" value="P:establishment of planar polarity of follicular epithelium"/>
    <property type="evidence" value="ECO:0000315"/>
    <property type="project" value="UniProtKB"/>
</dbReference>
<dbReference type="GO" id="GO:0045199">
    <property type="term" value="P:maintenance of epithelial cell apical/basal polarity"/>
    <property type="evidence" value="ECO:0007669"/>
    <property type="project" value="Ensembl"/>
</dbReference>
<dbReference type="GO" id="GO:0002446">
    <property type="term" value="P:neutrophil mediated immunity"/>
    <property type="evidence" value="ECO:0000315"/>
    <property type="project" value="UniProtKB"/>
</dbReference>
<dbReference type="GO" id="GO:1990266">
    <property type="term" value="P:neutrophil migration"/>
    <property type="evidence" value="ECO:0000315"/>
    <property type="project" value="UniProtKB"/>
</dbReference>
<dbReference type="GO" id="GO:0030220">
    <property type="term" value="P:platelet formation"/>
    <property type="evidence" value="ECO:0000315"/>
    <property type="project" value="UniProtKB"/>
</dbReference>
<dbReference type="GO" id="GO:0030836">
    <property type="term" value="P:positive regulation of actin filament depolymerization"/>
    <property type="evidence" value="ECO:0000316"/>
    <property type="project" value="MGI"/>
</dbReference>
<dbReference type="GO" id="GO:0008360">
    <property type="term" value="P:regulation of cell shape"/>
    <property type="evidence" value="ECO:0000315"/>
    <property type="project" value="UniProtKB"/>
</dbReference>
<dbReference type="GO" id="GO:0048713">
    <property type="term" value="P:regulation of oligodendrocyte differentiation"/>
    <property type="evidence" value="ECO:0000266"/>
    <property type="project" value="MGI"/>
</dbReference>
<dbReference type="GO" id="GO:0060307">
    <property type="term" value="P:regulation of ventricular cardiac muscle cell membrane repolarization"/>
    <property type="evidence" value="ECO:0000315"/>
    <property type="project" value="MGI"/>
</dbReference>
<dbReference type="GO" id="GO:0045214">
    <property type="term" value="P:sarcomere organization"/>
    <property type="evidence" value="ECO:0000315"/>
    <property type="project" value="MGI"/>
</dbReference>
<dbReference type="GO" id="GO:0007605">
    <property type="term" value="P:sensory perception of sound"/>
    <property type="evidence" value="ECO:0000266"/>
    <property type="project" value="MGI"/>
</dbReference>
<dbReference type="CDD" id="cd00200">
    <property type="entry name" value="WD40"/>
    <property type="match status" value="1"/>
</dbReference>
<dbReference type="FunFam" id="2.130.10.10:FF:000097">
    <property type="entry name" value="WD repeat domain 1"/>
    <property type="match status" value="1"/>
</dbReference>
<dbReference type="FunFam" id="2.130.10.10:FF:000203">
    <property type="entry name" value="WD repeat domain 1"/>
    <property type="match status" value="1"/>
</dbReference>
<dbReference type="Gene3D" id="2.130.10.10">
    <property type="entry name" value="YVTN repeat-like/Quinoprotein amine dehydrogenase"/>
    <property type="match status" value="2"/>
</dbReference>
<dbReference type="InterPro" id="IPR020472">
    <property type="entry name" value="G-protein_beta_WD-40_rep"/>
</dbReference>
<dbReference type="InterPro" id="IPR011045">
    <property type="entry name" value="N2O_reductase_N"/>
</dbReference>
<dbReference type="InterPro" id="IPR015943">
    <property type="entry name" value="WD40/YVTN_repeat-like_dom_sf"/>
</dbReference>
<dbReference type="InterPro" id="IPR019775">
    <property type="entry name" value="WD40_repeat_CS"/>
</dbReference>
<dbReference type="InterPro" id="IPR001680">
    <property type="entry name" value="WD40_rpt"/>
</dbReference>
<dbReference type="PANTHER" id="PTHR19856:SF0">
    <property type="entry name" value="WD REPEAT-CONTAINING PROTEIN 1"/>
    <property type="match status" value="1"/>
</dbReference>
<dbReference type="PANTHER" id="PTHR19856">
    <property type="entry name" value="WD-REPEATCONTAINING PROTEIN WDR1"/>
    <property type="match status" value="1"/>
</dbReference>
<dbReference type="Pfam" id="PF00400">
    <property type="entry name" value="WD40"/>
    <property type="match status" value="10"/>
</dbReference>
<dbReference type="PRINTS" id="PR00320">
    <property type="entry name" value="GPROTEINBRPT"/>
</dbReference>
<dbReference type="SMART" id="SM00320">
    <property type="entry name" value="WD40"/>
    <property type="match status" value="11"/>
</dbReference>
<dbReference type="SUPFAM" id="SSF50974">
    <property type="entry name" value="Nitrous oxide reductase, N-terminal domain"/>
    <property type="match status" value="1"/>
</dbReference>
<dbReference type="SUPFAM" id="SSF50960">
    <property type="entry name" value="TolB, C-terminal domain"/>
    <property type="match status" value="1"/>
</dbReference>
<dbReference type="PROSITE" id="PS00678">
    <property type="entry name" value="WD_REPEATS_1"/>
    <property type="match status" value="1"/>
</dbReference>
<dbReference type="PROSITE" id="PS50082">
    <property type="entry name" value="WD_REPEATS_2"/>
    <property type="match status" value="5"/>
</dbReference>
<dbReference type="PROSITE" id="PS50294">
    <property type="entry name" value="WD_REPEATS_REGION"/>
    <property type="match status" value="1"/>
</dbReference>
<keyword id="KW-0007">Acetylation</keyword>
<keyword id="KW-0009">Actin-binding</keyword>
<keyword id="KW-0965">Cell junction</keyword>
<keyword id="KW-0966">Cell projection</keyword>
<keyword id="KW-0963">Cytoplasm</keyword>
<keyword id="KW-0206">Cytoskeleton</keyword>
<keyword id="KW-0903">Direct protein sequencing</keyword>
<keyword id="KW-0597">Phosphoprotein</keyword>
<keyword id="KW-1185">Reference proteome</keyword>
<keyword id="KW-0677">Repeat</keyword>
<keyword id="KW-0853">WD repeat</keyword>
<feature type="chain" id="PRO_0000051342" description="WD repeat-containing protein 1">
    <location>
        <begin position="1"/>
        <end position="606"/>
    </location>
</feature>
<feature type="repeat" description="WD 1">
    <location>
        <begin position="4"/>
        <end position="45"/>
    </location>
</feature>
<feature type="repeat" description="WD 2">
    <location>
        <begin position="48"/>
        <end position="87"/>
    </location>
</feature>
<feature type="repeat" description="WD 3">
    <location>
        <begin position="93"/>
        <end position="135"/>
    </location>
</feature>
<feature type="repeat" description="WD 4">
    <location>
        <begin position="138"/>
        <end position="176"/>
    </location>
</feature>
<feature type="repeat" description="WD 5">
    <location>
        <begin position="180"/>
        <end position="218"/>
    </location>
</feature>
<feature type="repeat" description="WD 6">
    <location>
        <begin position="224"/>
        <end position="263"/>
    </location>
</feature>
<feature type="repeat" description="WD 7">
    <location>
        <begin position="270"/>
        <end position="306"/>
    </location>
</feature>
<feature type="repeat" description="WD 8">
    <location>
        <begin position="311"/>
        <end position="351"/>
    </location>
</feature>
<feature type="repeat" description="WD 9">
    <location>
        <begin position="358"/>
        <end position="408"/>
    </location>
</feature>
<feature type="repeat" description="WD 10">
    <location>
        <begin position="432"/>
        <end position="474"/>
    </location>
</feature>
<feature type="repeat" description="WD 11">
    <location>
        <begin position="480"/>
        <end position="518"/>
    </location>
</feature>
<feature type="repeat" description="WD 12">
    <location>
        <begin position="523"/>
        <end position="561"/>
    </location>
</feature>
<feature type="repeat" description="WD 13">
    <location>
        <begin position="566"/>
        <end position="604"/>
    </location>
</feature>
<feature type="modified residue" description="N6-acetyllysine" evidence="1">
    <location>
        <position position="28"/>
    </location>
</feature>
<feature type="modified residue" description="N6-acetyllysine" evidence="1">
    <location>
        <position position="81"/>
    </location>
</feature>
<feature type="modified residue" description="N6-acetyllysine" evidence="9">
    <location>
        <position position="95"/>
    </location>
</feature>
<feature type="modified residue" description="N6-acetyllysine" evidence="1">
    <location>
        <position position="115"/>
    </location>
</feature>
<feature type="modified residue" description="Phosphotyrosine" evidence="8">
    <location>
        <position position="238"/>
    </location>
</feature>
<feature type="modified residue" description="N6-acetyllysine" evidence="9">
    <location>
        <position position="480"/>
    </location>
</feature>
<evidence type="ECO:0000250" key="1">
    <source>
        <dbReference type="UniProtKB" id="O75083"/>
    </source>
</evidence>
<evidence type="ECO:0000250" key="2">
    <source>
        <dbReference type="UniProtKB" id="Q5RKI0"/>
    </source>
</evidence>
<evidence type="ECO:0000250" key="3">
    <source>
        <dbReference type="UniProtKB" id="Q9W7F2"/>
    </source>
</evidence>
<evidence type="ECO:0000269" key="4">
    <source>
    </source>
</evidence>
<evidence type="ECO:0000269" key="5">
    <source>
    </source>
</evidence>
<evidence type="ECO:0000269" key="6">
    <source>
    </source>
</evidence>
<evidence type="ECO:0000305" key="7"/>
<evidence type="ECO:0007744" key="8">
    <source>
    </source>
</evidence>
<evidence type="ECO:0007744" key="9">
    <source>
    </source>
</evidence>
<proteinExistence type="evidence at protein level"/>